<dbReference type="EMBL" id="M58700">
    <property type="protein sequence ID" value="AAA63448.1"/>
    <property type="molecule type" value="mRNA"/>
</dbReference>
<dbReference type="PIR" id="A31857">
    <property type="entry name" value="A31857"/>
</dbReference>
<dbReference type="RefSeq" id="XP_013847653.1">
    <property type="nucleotide sequence ID" value="XM_013992199.1"/>
</dbReference>
<dbReference type="RefSeq" id="XP_020938200.1">
    <property type="nucleotide sequence ID" value="XM_021082541.1"/>
</dbReference>
<dbReference type="RefSeq" id="XP_020938201.1">
    <property type="nucleotide sequence ID" value="XM_021082542.1"/>
</dbReference>
<dbReference type="RefSeq" id="XP_020938202.1">
    <property type="nucleotide sequence ID" value="XM_021082543.1"/>
</dbReference>
<dbReference type="PDB" id="1DFJ">
    <property type="method" value="X-ray"/>
    <property type="resolution" value="2.50 A"/>
    <property type="chains" value="I=1-456"/>
</dbReference>
<dbReference type="PDB" id="2BNH">
    <property type="method" value="X-ray"/>
    <property type="resolution" value="2.30 A"/>
    <property type="chains" value="A=1-456"/>
</dbReference>
<dbReference type="PDBsum" id="1DFJ"/>
<dbReference type="PDBsum" id="2BNH"/>
<dbReference type="SMR" id="P10775"/>
<dbReference type="FunCoup" id="P10775">
    <property type="interactions" value="1411"/>
</dbReference>
<dbReference type="IntAct" id="P10775">
    <property type="interactions" value="1"/>
</dbReference>
<dbReference type="MINT" id="P10775"/>
<dbReference type="STRING" id="9823.ENSSSCP00000043100"/>
<dbReference type="iPTMnet" id="P10775"/>
<dbReference type="PeptideAtlas" id="P10775"/>
<dbReference type="Ensembl" id="ENSSSCT00055003614.1">
    <property type="protein sequence ID" value="ENSSSCP00055002749.1"/>
    <property type="gene ID" value="ENSSSCG00055001944.1"/>
</dbReference>
<dbReference type="Ensembl" id="ENSSSCT00055003629.1">
    <property type="protein sequence ID" value="ENSSSCP00055002762.1"/>
    <property type="gene ID" value="ENSSSCG00055001944.1"/>
</dbReference>
<dbReference type="Ensembl" id="ENSSSCT00055003640.1">
    <property type="protein sequence ID" value="ENSSSCP00055002773.1"/>
    <property type="gene ID" value="ENSSSCG00055001944.1"/>
</dbReference>
<dbReference type="Ensembl" id="ENSSSCT00055003675.1">
    <property type="protein sequence ID" value="ENSSSCP00055002805.1"/>
    <property type="gene ID" value="ENSSSCG00055001944.1"/>
</dbReference>
<dbReference type="Ensembl" id="ENSSSCT00070055317.1">
    <property type="protein sequence ID" value="ENSSSCP00070046958.1"/>
    <property type="gene ID" value="ENSSSCG00070027590.1"/>
</dbReference>
<dbReference type="Ensembl" id="ENSSSCT00070055321.1">
    <property type="protein sequence ID" value="ENSSSCP00070046962.1"/>
    <property type="gene ID" value="ENSSSCG00070027590.1"/>
</dbReference>
<dbReference type="GeneID" id="445517"/>
<dbReference type="InParanoid" id="P10775"/>
<dbReference type="OMA" id="CQLECLW"/>
<dbReference type="EvolutionaryTrace" id="P10775"/>
<dbReference type="Proteomes" id="UP000008227">
    <property type="component" value="Unplaced"/>
</dbReference>
<dbReference type="Proteomes" id="UP000314985">
    <property type="component" value="Chromosome 2"/>
</dbReference>
<dbReference type="Proteomes" id="UP000694570">
    <property type="component" value="Unplaced"/>
</dbReference>
<dbReference type="Proteomes" id="UP000694571">
    <property type="component" value="Unplaced"/>
</dbReference>
<dbReference type="Proteomes" id="UP000694720">
    <property type="component" value="Unplaced"/>
</dbReference>
<dbReference type="Proteomes" id="UP000694722">
    <property type="component" value="Unplaced"/>
</dbReference>
<dbReference type="Proteomes" id="UP000694723">
    <property type="component" value="Unplaced"/>
</dbReference>
<dbReference type="Proteomes" id="UP000694724">
    <property type="component" value="Unplaced"/>
</dbReference>
<dbReference type="Proteomes" id="UP000694725">
    <property type="component" value="Unplaced"/>
</dbReference>
<dbReference type="Proteomes" id="UP000694726">
    <property type="component" value="Unplaced"/>
</dbReference>
<dbReference type="Proteomes" id="UP000694727">
    <property type="component" value="Unplaced"/>
</dbReference>
<dbReference type="Proteomes" id="UP000694728">
    <property type="component" value="Unplaced"/>
</dbReference>
<dbReference type="GO" id="GO:0032311">
    <property type="term" value="C:angiogenin-PRI complex"/>
    <property type="evidence" value="ECO:0000318"/>
    <property type="project" value="GO_Central"/>
</dbReference>
<dbReference type="GO" id="GO:0005737">
    <property type="term" value="C:cytoplasm"/>
    <property type="evidence" value="ECO:0000314"/>
    <property type="project" value="UniProtKB"/>
</dbReference>
<dbReference type="GO" id="GO:0030027">
    <property type="term" value="C:lamellipodium"/>
    <property type="evidence" value="ECO:0000318"/>
    <property type="project" value="GO_Central"/>
</dbReference>
<dbReference type="GO" id="GO:0005654">
    <property type="term" value="C:nucleoplasm"/>
    <property type="evidence" value="ECO:0000318"/>
    <property type="project" value="GO_Central"/>
</dbReference>
<dbReference type="GO" id="GO:0005634">
    <property type="term" value="C:nucleus"/>
    <property type="evidence" value="ECO:0000250"/>
    <property type="project" value="UniProtKB"/>
</dbReference>
<dbReference type="GO" id="GO:0005886">
    <property type="term" value="C:plasma membrane"/>
    <property type="evidence" value="ECO:0000318"/>
    <property type="project" value="GO_Central"/>
</dbReference>
<dbReference type="GO" id="GO:0008428">
    <property type="term" value="F:ribonuclease inhibitor activity"/>
    <property type="evidence" value="ECO:0000314"/>
    <property type="project" value="UniProtKB"/>
</dbReference>
<dbReference type="GO" id="GO:0016477">
    <property type="term" value="P:cell migration"/>
    <property type="evidence" value="ECO:0000318"/>
    <property type="project" value="GO_Central"/>
</dbReference>
<dbReference type="GO" id="GO:0045765">
    <property type="term" value="P:regulation of angiogenesis"/>
    <property type="evidence" value="ECO:0000318"/>
    <property type="project" value="GO_Central"/>
</dbReference>
<dbReference type="GO" id="GO:0034315">
    <property type="term" value="P:regulation of Arp2/3 complex-mediated actin nucleation"/>
    <property type="evidence" value="ECO:0000318"/>
    <property type="project" value="GO_Central"/>
</dbReference>
<dbReference type="CDD" id="cd00116">
    <property type="entry name" value="LRR_RI"/>
    <property type="match status" value="1"/>
</dbReference>
<dbReference type="Gene3D" id="3.80.10.10">
    <property type="entry name" value="Ribonuclease Inhibitor"/>
    <property type="match status" value="1"/>
</dbReference>
<dbReference type="InterPro" id="IPR001611">
    <property type="entry name" value="Leu-rich_rpt"/>
</dbReference>
<dbReference type="InterPro" id="IPR006553">
    <property type="entry name" value="Leu-rich_rpt_Cys-con_subtyp"/>
</dbReference>
<dbReference type="InterPro" id="IPR032675">
    <property type="entry name" value="LRR_dom_sf"/>
</dbReference>
<dbReference type="InterPro" id="IPR041302">
    <property type="entry name" value="LRR_RI_cap"/>
</dbReference>
<dbReference type="InterPro" id="IPR050637">
    <property type="entry name" value="NLRP_innate_immun_reg"/>
</dbReference>
<dbReference type="PANTHER" id="PTHR45690:SF4">
    <property type="entry name" value="NACHT, LRR AND PYD DOMAINS-CONTAINING PROTEIN 10"/>
    <property type="match status" value="1"/>
</dbReference>
<dbReference type="PANTHER" id="PTHR45690">
    <property type="entry name" value="NACHT, LRR AND PYD DOMAINS-CONTAINING PROTEIN 12"/>
    <property type="match status" value="1"/>
</dbReference>
<dbReference type="Pfam" id="PF13516">
    <property type="entry name" value="LRR_6"/>
    <property type="match status" value="7"/>
</dbReference>
<dbReference type="Pfam" id="PF18779">
    <property type="entry name" value="LRR_RI_capping"/>
    <property type="match status" value="1"/>
</dbReference>
<dbReference type="SMART" id="SM00367">
    <property type="entry name" value="LRR_CC"/>
    <property type="match status" value="6"/>
</dbReference>
<dbReference type="SMART" id="SM00368">
    <property type="entry name" value="LRR_RI"/>
    <property type="match status" value="14"/>
</dbReference>
<dbReference type="SUPFAM" id="SSF52047">
    <property type="entry name" value="RNI-like"/>
    <property type="match status" value="2"/>
</dbReference>
<dbReference type="PROSITE" id="PS51450">
    <property type="entry name" value="LRR"/>
    <property type="match status" value="6"/>
</dbReference>
<evidence type="ECO:0000250" key="1">
    <source>
        <dbReference type="UniProtKB" id="P13489"/>
    </source>
</evidence>
<evidence type="ECO:0000269" key="2">
    <source>
    </source>
</evidence>
<evidence type="ECO:0000269" key="3">
    <source>
    </source>
</evidence>
<evidence type="ECO:0000303" key="4">
    <source>
    </source>
</evidence>
<evidence type="ECO:0007829" key="5">
    <source>
        <dbReference type="PDB" id="1DFJ"/>
    </source>
</evidence>
<evidence type="ECO:0007829" key="6">
    <source>
        <dbReference type="PDB" id="2BNH"/>
    </source>
</evidence>
<gene>
    <name type="primary">RNH1</name>
    <name type="synonym">RI</name>
    <name type="synonym">RNH</name>
</gene>
<protein>
    <recommendedName>
        <fullName evidence="4">Ribonuclease inhibitor</fullName>
    </recommendedName>
    <alternativeName>
        <fullName>Ribonuclease/angiogenin inhibitor 1</fullName>
    </alternativeName>
</protein>
<proteinExistence type="evidence at protein level"/>
<keyword id="KW-0002">3D-structure</keyword>
<keyword id="KW-0007">Acetylation</keyword>
<keyword id="KW-0963">Cytoplasm</keyword>
<keyword id="KW-0903">Direct protein sequencing</keyword>
<keyword id="KW-0433">Leucine-rich repeat</keyword>
<keyword id="KW-0539">Nucleus</keyword>
<keyword id="KW-0597">Phosphoprotein</keyword>
<keyword id="KW-1185">Reference proteome</keyword>
<keyword id="KW-0677">Repeat</keyword>
<feature type="chain" id="PRO_0000097346" description="Ribonuclease inhibitor">
    <location>
        <begin position="1"/>
        <end position="456"/>
    </location>
</feature>
<feature type="repeat" description="LRR 1">
    <location>
        <begin position="15"/>
        <end position="43"/>
    </location>
</feature>
<feature type="repeat" description="LRR 2">
    <location>
        <begin position="44"/>
        <end position="71"/>
    </location>
</feature>
<feature type="repeat" description="LRR 3">
    <location>
        <begin position="72"/>
        <end position="100"/>
    </location>
</feature>
<feature type="repeat" description="LRR 4">
    <location>
        <begin position="101"/>
        <end position="128"/>
    </location>
</feature>
<feature type="repeat" description="LRR 5">
    <location>
        <begin position="129"/>
        <end position="157"/>
    </location>
</feature>
<feature type="repeat" description="LRR 6">
    <location>
        <begin position="158"/>
        <end position="185"/>
    </location>
</feature>
<feature type="repeat" description="LRR 7">
    <location>
        <begin position="186"/>
        <end position="214"/>
    </location>
</feature>
<feature type="repeat" description="LRR 8">
    <location>
        <begin position="215"/>
        <end position="242"/>
    </location>
</feature>
<feature type="repeat" description="LRR 9">
    <location>
        <begin position="243"/>
        <end position="271"/>
    </location>
</feature>
<feature type="repeat" description="LRR 10">
    <location>
        <begin position="272"/>
        <end position="299"/>
    </location>
</feature>
<feature type="repeat" description="LRR 11">
    <location>
        <begin position="300"/>
        <end position="328"/>
    </location>
</feature>
<feature type="repeat" description="LRR 12">
    <location>
        <begin position="329"/>
        <end position="356"/>
    </location>
</feature>
<feature type="repeat" description="LRR 13">
    <location>
        <begin position="357"/>
        <end position="385"/>
    </location>
</feature>
<feature type="repeat" description="LRR 14">
    <location>
        <begin position="386"/>
        <end position="413"/>
    </location>
</feature>
<feature type="repeat" description="LRR 15">
    <location>
        <begin position="414"/>
        <end position="442"/>
    </location>
</feature>
<feature type="modified residue" description="N-acetylmethionine" evidence="3">
    <location>
        <position position="1"/>
    </location>
</feature>
<feature type="modified residue" description="Phosphoserine" evidence="1">
    <location>
        <position position="86"/>
    </location>
</feature>
<feature type="strand" evidence="6">
    <location>
        <begin position="5"/>
        <end position="7"/>
    </location>
</feature>
<feature type="helix" evidence="6">
    <location>
        <begin position="12"/>
        <end position="22"/>
    </location>
</feature>
<feature type="strand" evidence="6">
    <location>
        <begin position="26"/>
        <end position="31"/>
    </location>
</feature>
<feature type="helix" evidence="6">
    <location>
        <begin position="37"/>
        <end position="47"/>
    </location>
</feature>
<feature type="strand" evidence="6">
    <location>
        <begin position="55"/>
        <end position="57"/>
    </location>
</feature>
<feature type="helix" evidence="6">
    <location>
        <begin position="64"/>
        <end position="75"/>
    </location>
</feature>
<feature type="strand" evidence="6">
    <location>
        <begin position="84"/>
        <end position="86"/>
    </location>
</feature>
<feature type="helix" evidence="6">
    <location>
        <begin position="94"/>
        <end position="98"/>
    </location>
</feature>
<feature type="helix" evidence="6">
    <location>
        <begin position="100"/>
        <end position="106"/>
    </location>
</feature>
<feature type="strand" evidence="6">
    <location>
        <begin position="112"/>
        <end position="114"/>
    </location>
</feature>
<feature type="helix" evidence="6">
    <location>
        <begin position="121"/>
        <end position="133"/>
    </location>
</feature>
<feature type="strand" evidence="6">
    <location>
        <begin position="141"/>
        <end position="143"/>
    </location>
</feature>
<feature type="helix" evidence="6">
    <location>
        <begin position="151"/>
        <end position="163"/>
    </location>
</feature>
<feature type="strand" evidence="6">
    <location>
        <begin position="169"/>
        <end position="171"/>
    </location>
</feature>
<feature type="helix" evidence="6">
    <location>
        <begin position="178"/>
        <end position="190"/>
    </location>
</feature>
<feature type="strand" evidence="6">
    <location>
        <begin position="198"/>
        <end position="200"/>
    </location>
</feature>
<feature type="helix" evidence="6">
    <location>
        <begin position="208"/>
        <end position="220"/>
    </location>
</feature>
<feature type="strand" evidence="6">
    <location>
        <begin position="226"/>
        <end position="228"/>
    </location>
</feature>
<feature type="helix" evidence="6">
    <location>
        <begin position="235"/>
        <end position="246"/>
    </location>
</feature>
<feature type="strand" evidence="6">
    <location>
        <begin position="255"/>
        <end position="257"/>
    </location>
</feature>
<feature type="helix" evidence="6">
    <location>
        <begin position="265"/>
        <end position="277"/>
    </location>
</feature>
<feature type="strand" evidence="6">
    <location>
        <begin position="283"/>
        <end position="285"/>
    </location>
</feature>
<feature type="helix" evidence="6">
    <location>
        <begin position="292"/>
        <end position="303"/>
    </location>
</feature>
<feature type="strand" evidence="6">
    <location>
        <begin position="312"/>
        <end position="314"/>
    </location>
</feature>
<feature type="helix" evidence="6">
    <location>
        <begin position="322"/>
        <end position="324"/>
    </location>
</feature>
<feature type="helix" evidence="6">
    <location>
        <begin position="325"/>
        <end position="334"/>
    </location>
</feature>
<feature type="strand" evidence="6">
    <location>
        <begin position="340"/>
        <end position="342"/>
    </location>
</feature>
<feature type="strand" evidence="6">
    <location>
        <begin position="345"/>
        <end position="347"/>
    </location>
</feature>
<feature type="helix" evidence="6">
    <location>
        <begin position="349"/>
        <end position="359"/>
    </location>
</feature>
<feature type="strand" evidence="6">
    <location>
        <begin position="362"/>
        <end position="364"/>
    </location>
</feature>
<feature type="strand" evidence="6">
    <location>
        <begin position="369"/>
        <end position="371"/>
    </location>
</feature>
<feature type="helix" evidence="6">
    <location>
        <begin position="379"/>
        <end position="391"/>
    </location>
</feature>
<feature type="strand" evidence="6">
    <location>
        <begin position="397"/>
        <end position="399"/>
    </location>
</feature>
<feature type="strand" evidence="5">
    <location>
        <begin position="402"/>
        <end position="404"/>
    </location>
</feature>
<feature type="helix" evidence="6">
    <location>
        <begin position="407"/>
        <end position="417"/>
    </location>
</feature>
<feature type="strand" evidence="6">
    <location>
        <begin position="419"/>
        <end position="421"/>
    </location>
</feature>
<feature type="strand" evidence="6">
    <location>
        <begin position="426"/>
        <end position="428"/>
    </location>
</feature>
<feature type="helix" evidence="6">
    <location>
        <begin position="436"/>
        <end position="448"/>
    </location>
</feature>
<feature type="strand" evidence="6">
    <location>
        <begin position="453"/>
        <end position="455"/>
    </location>
</feature>
<organism>
    <name type="scientific">Sus scrofa</name>
    <name type="common">Pig</name>
    <dbReference type="NCBI Taxonomy" id="9823"/>
    <lineage>
        <taxon>Eukaryota</taxon>
        <taxon>Metazoa</taxon>
        <taxon>Chordata</taxon>
        <taxon>Craniata</taxon>
        <taxon>Vertebrata</taxon>
        <taxon>Euteleostomi</taxon>
        <taxon>Mammalia</taxon>
        <taxon>Eutheria</taxon>
        <taxon>Laurasiatheria</taxon>
        <taxon>Artiodactyla</taxon>
        <taxon>Suina</taxon>
        <taxon>Suidae</taxon>
        <taxon>Sus</taxon>
    </lineage>
</organism>
<comment type="function">
    <text evidence="1 2 3">Ribonuclease inhibitor which inhibits RNASE1, RNASE2 and angiogenin (ANG). May play a role in redox homeostasis (PubMed:2271559, PubMed:3219361). Required to inhibit the cytotoxic tRNA ribonuclease activity of ANG in the cytoplasm in absence of stress (By similarity). Relocates to the nucleus in response to stress, relieving inhibition of ANG in the cytoplasm, and inhibiting the angiogenic activity of ANG in the nucleus (By similarity).</text>
</comment>
<comment type="subunit">
    <text evidence="2">Forms high-affinity heterodimers with RNASE1, ANG and RNASE2.</text>
</comment>
<comment type="subcellular location">
    <subcellularLocation>
        <location evidence="3">Cytoplasm</location>
    </subcellularLocation>
    <subcellularLocation>
        <location evidence="1">Nucleus</location>
    </subcellularLocation>
    <text evidence="1">Localizes in the cytoplasm in absence of stress; translocates to the nucleus in response to stress.</text>
</comment>
<comment type="domain">
    <text evidence="1">The LRR domain forms a horseshoe-shaped structure that interacts tightly with target RNases via a large protein interaction surface on its interior side.</text>
</comment>
<sequence>MNLDIHCEQLSDARWTELLPLLQQYEVVRLDDCGLTEEHCKDIGSALRANPSLTELCLRTNELGDAGVHLVLQGLQSPTCKIQKLSLQNCSLTEAGCGVLPSTLRSLPTLRELHLSDNPLGDAGLRLLCEGLLDPQCHLEKLQLEYCRLTAASCEPLASVLRATRALKELTVSNNDIGEAGARVLGQGLADSACQLETLRLENCGLTPANCKDLCGIVASQASLRELDLGSNGLGDAGIAELCPGLLSPASRLKTLWLWECDITASGCRDLCRVLQAKETLKELSLAGNKLGDEGARLLCESLLQPGCQLESLWVKSCSLTAACCQHVSLMLTQNKHLLELQLSSNKLGDSGIQELCQALSQPGTTLRVLCLGDCEVTNSGCSSLASLLLANRSLRELDLSNNCVGDPGVLQLLGSLEQPGCALEQLVLYDTYWTEEVEDRLQALEGSKPGLRVIS</sequence>
<name>RINI_PIG</name>
<reference key="1">
    <citation type="journal article" date="1988" name="Biochemistry">
        <title>Amino acid sequence of the ribonuclease inhibitor from porcine liver reveals the presence of leucine-rich repeats.</title>
        <authorList>
            <person name="Hofsteenge J."/>
            <person name="Kieffer B."/>
            <person name="Matthies R."/>
            <person name="Hemmings B.A."/>
            <person name="Stone S.R."/>
        </authorList>
    </citation>
    <scope>PROTEIN SEQUENCE</scope>
    <scope>FUNCTION</scope>
    <scope>SUBCELLULAR LOCATION</scope>
    <scope>ACETYLATION AT MET-1</scope>
    <source>
        <tissue>Liver</tissue>
    </source>
</reference>
<reference key="2">
    <citation type="journal article" date="1990" name="Biochemistry">
        <title>Protein chemical and kinetic characterization of recombinant porcine ribonuclease inhibitor expressed in Saccharomyces cerevisiae.</title>
        <authorList>
            <person name="Vicentini A.M."/>
            <person name="Kieffer B."/>
            <person name="Matthies R."/>
            <person name="Meyhack B."/>
            <person name="Hemmings B.A."/>
            <person name="Stone S.R."/>
            <person name="Hofsteenge J."/>
        </authorList>
    </citation>
    <scope>NUCLEOTIDE SEQUENCE [MRNA] OF 82-456</scope>
    <scope>FUNCTION</scope>
    <scope>SUBUNIT</scope>
    <source>
        <tissue>Kidney</tissue>
    </source>
</reference>
<reference key="3">
    <citation type="journal article" date="1993" name="Nature">
        <title>Crystal structure of porcine ribonuclease inhibitor, a protein with leucine-rich repeats.</title>
        <authorList>
            <person name="Kobe B."/>
            <person name="Deisenhofer J."/>
        </authorList>
    </citation>
    <scope>X-RAY CRYSTALLOGRAPHY (2.5 ANGSTROMS)</scope>
</reference>
<reference key="4">
    <citation type="journal article" date="1995" name="Nature">
        <title>A structural basis of the interactions between leucine-rich repeats and protein ligands.</title>
        <authorList>
            <person name="Kobe B."/>
            <person name="Deisenhofer J."/>
        </authorList>
    </citation>
    <scope>X-RAY CRYSTALLOGRAPHY (2.5 ANGSTROMS)</scope>
</reference>
<accession>P10775</accession>